<evidence type="ECO:0000255" key="1">
    <source>
        <dbReference type="HAMAP-Rule" id="MF_01021"/>
    </source>
</evidence>
<organism>
    <name type="scientific">Paramagnetospirillum magneticum (strain ATCC 700264 / AMB-1)</name>
    <name type="common">Magnetospirillum magneticum</name>
    <dbReference type="NCBI Taxonomy" id="342108"/>
    <lineage>
        <taxon>Bacteria</taxon>
        <taxon>Pseudomonadati</taxon>
        <taxon>Pseudomonadota</taxon>
        <taxon>Alphaproteobacteria</taxon>
        <taxon>Rhodospirillales</taxon>
        <taxon>Magnetospirillaceae</taxon>
        <taxon>Paramagnetospirillum</taxon>
    </lineage>
</organism>
<feature type="chain" id="PRO_0000319696" description="Phosphoribosyl-AMP cyclohydrolase">
    <location>
        <begin position="1"/>
        <end position="132"/>
    </location>
</feature>
<feature type="binding site" evidence="1">
    <location>
        <position position="82"/>
    </location>
    <ligand>
        <name>Mg(2+)</name>
        <dbReference type="ChEBI" id="CHEBI:18420"/>
    </ligand>
</feature>
<feature type="binding site" evidence="1">
    <location>
        <position position="83"/>
    </location>
    <ligand>
        <name>Zn(2+)</name>
        <dbReference type="ChEBI" id="CHEBI:29105"/>
        <note>ligand shared between dimeric partners</note>
    </ligand>
</feature>
<feature type="binding site" evidence="1">
    <location>
        <position position="84"/>
    </location>
    <ligand>
        <name>Mg(2+)</name>
        <dbReference type="ChEBI" id="CHEBI:18420"/>
    </ligand>
</feature>
<feature type="binding site" evidence="1">
    <location>
        <position position="86"/>
    </location>
    <ligand>
        <name>Mg(2+)</name>
        <dbReference type="ChEBI" id="CHEBI:18420"/>
    </ligand>
</feature>
<feature type="binding site" evidence="1">
    <location>
        <position position="99"/>
    </location>
    <ligand>
        <name>Zn(2+)</name>
        <dbReference type="ChEBI" id="CHEBI:29105"/>
        <note>ligand shared between dimeric partners</note>
    </ligand>
</feature>
<feature type="binding site" evidence="1">
    <location>
        <position position="106"/>
    </location>
    <ligand>
        <name>Zn(2+)</name>
        <dbReference type="ChEBI" id="CHEBI:29105"/>
        <note>ligand shared between dimeric partners</note>
    </ligand>
</feature>
<gene>
    <name evidence="1" type="primary">hisI</name>
    <name type="ordered locus">amb2307</name>
</gene>
<name>HIS3_PARM1</name>
<sequence length="132" mass="14441">MSAIDSAAVLAKIKFNADGLVPAIAQQHDTGEVLMMAWMNAESVAETLATGRVCYFSRSRGGLWRKGETSGQQQRLKDFLIDCDGDTILLKVDQDGVACHTGRRTCFYTAARPEGLTEVAKVQVSPDELYKK</sequence>
<reference key="1">
    <citation type="journal article" date="2005" name="DNA Res.">
        <title>Complete genome sequence of the facultative anaerobic magnetotactic bacterium Magnetospirillum sp. strain AMB-1.</title>
        <authorList>
            <person name="Matsunaga T."/>
            <person name="Okamura Y."/>
            <person name="Fukuda Y."/>
            <person name="Wahyudi A.T."/>
            <person name="Murase Y."/>
            <person name="Takeyama H."/>
        </authorList>
    </citation>
    <scope>NUCLEOTIDE SEQUENCE [LARGE SCALE GENOMIC DNA]</scope>
    <source>
        <strain>ATCC 700264 / AMB-1</strain>
    </source>
</reference>
<protein>
    <recommendedName>
        <fullName evidence="1">Phosphoribosyl-AMP cyclohydrolase</fullName>
        <shortName evidence="1">PRA-CH</shortName>
        <ecNumber evidence="1">3.5.4.19</ecNumber>
    </recommendedName>
</protein>
<dbReference type="EC" id="3.5.4.19" evidence="1"/>
<dbReference type="EMBL" id="AP007255">
    <property type="protein sequence ID" value="BAE51111.1"/>
    <property type="molecule type" value="Genomic_DNA"/>
</dbReference>
<dbReference type="RefSeq" id="WP_011384704.1">
    <property type="nucleotide sequence ID" value="NC_007626.1"/>
</dbReference>
<dbReference type="SMR" id="Q2W4W4"/>
<dbReference type="STRING" id="342108.amb2307"/>
<dbReference type="KEGG" id="mag:amb2307"/>
<dbReference type="HOGENOM" id="CLU_048577_5_2_5"/>
<dbReference type="OrthoDB" id="9795769at2"/>
<dbReference type="UniPathway" id="UPA00031">
    <property type="reaction ID" value="UER00008"/>
</dbReference>
<dbReference type="Proteomes" id="UP000007058">
    <property type="component" value="Chromosome"/>
</dbReference>
<dbReference type="GO" id="GO:0005737">
    <property type="term" value="C:cytoplasm"/>
    <property type="evidence" value="ECO:0007669"/>
    <property type="project" value="UniProtKB-SubCell"/>
</dbReference>
<dbReference type="GO" id="GO:0000287">
    <property type="term" value="F:magnesium ion binding"/>
    <property type="evidence" value="ECO:0007669"/>
    <property type="project" value="UniProtKB-UniRule"/>
</dbReference>
<dbReference type="GO" id="GO:0004635">
    <property type="term" value="F:phosphoribosyl-AMP cyclohydrolase activity"/>
    <property type="evidence" value="ECO:0007669"/>
    <property type="project" value="UniProtKB-UniRule"/>
</dbReference>
<dbReference type="GO" id="GO:0008270">
    <property type="term" value="F:zinc ion binding"/>
    <property type="evidence" value="ECO:0007669"/>
    <property type="project" value="UniProtKB-UniRule"/>
</dbReference>
<dbReference type="GO" id="GO:0000105">
    <property type="term" value="P:L-histidine biosynthetic process"/>
    <property type="evidence" value="ECO:0007669"/>
    <property type="project" value="UniProtKB-UniRule"/>
</dbReference>
<dbReference type="FunFam" id="3.10.20.810:FF:000001">
    <property type="entry name" value="Histidine biosynthesis bifunctional protein HisIE"/>
    <property type="match status" value="1"/>
</dbReference>
<dbReference type="Gene3D" id="3.10.20.810">
    <property type="entry name" value="Phosphoribosyl-AMP cyclohydrolase"/>
    <property type="match status" value="1"/>
</dbReference>
<dbReference type="HAMAP" id="MF_01021">
    <property type="entry name" value="HisI"/>
    <property type="match status" value="1"/>
</dbReference>
<dbReference type="InterPro" id="IPR026660">
    <property type="entry name" value="PRA-CH"/>
</dbReference>
<dbReference type="InterPro" id="IPR002496">
    <property type="entry name" value="PRib_AMP_CycHydrolase_dom"/>
</dbReference>
<dbReference type="InterPro" id="IPR038019">
    <property type="entry name" value="PRib_AMP_CycHydrolase_sf"/>
</dbReference>
<dbReference type="NCBIfam" id="NF000768">
    <property type="entry name" value="PRK00051.1"/>
    <property type="match status" value="1"/>
</dbReference>
<dbReference type="PANTHER" id="PTHR42945">
    <property type="entry name" value="HISTIDINE BIOSYNTHESIS BIFUNCTIONAL PROTEIN"/>
    <property type="match status" value="1"/>
</dbReference>
<dbReference type="PANTHER" id="PTHR42945:SF11">
    <property type="entry name" value="PHOSPHORIBOSYL-AMP CYCLOHYDROLASE"/>
    <property type="match status" value="1"/>
</dbReference>
<dbReference type="Pfam" id="PF01502">
    <property type="entry name" value="PRA-CH"/>
    <property type="match status" value="1"/>
</dbReference>
<dbReference type="SUPFAM" id="SSF141734">
    <property type="entry name" value="HisI-like"/>
    <property type="match status" value="1"/>
</dbReference>
<proteinExistence type="inferred from homology"/>
<comment type="function">
    <text evidence="1">Catalyzes the hydrolysis of the adenine ring of phosphoribosyl-AMP.</text>
</comment>
<comment type="catalytic activity">
    <reaction evidence="1">
        <text>1-(5-phospho-beta-D-ribosyl)-5'-AMP + H2O = 1-(5-phospho-beta-D-ribosyl)-5-[(5-phospho-beta-D-ribosylamino)methylideneamino]imidazole-4-carboxamide</text>
        <dbReference type="Rhea" id="RHEA:20049"/>
        <dbReference type="ChEBI" id="CHEBI:15377"/>
        <dbReference type="ChEBI" id="CHEBI:58435"/>
        <dbReference type="ChEBI" id="CHEBI:59457"/>
        <dbReference type="EC" id="3.5.4.19"/>
    </reaction>
</comment>
<comment type="cofactor">
    <cofactor evidence="1">
        <name>Mg(2+)</name>
        <dbReference type="ChEBI" id="CHEBI:18420"/>
    </cofactor>
    <text evidence="1">Binds 1 Mg(2+) ion per subunit.</text>
</comment>
<comment type="cofactor">
    <cofactor evidence="1">
        <name>Zn(2+)</name>
        <dbReference type="ChEBI" id="CHEBI:29105"/>
    </cofactor>
    <text evidence="1">Binds 1 zinc ion per subunit.</text>
</comment>
<comment type="pathway">
    <text evidence="1">Amino-acid biosynthesis; L-histidine biosynthesis; L-histidine from 5-phospho-alpha-D-ribose 1-diphosphate: step 3/9.</text>
</comment>
<comment type="subunit">
    <text evidence="1">Homodimer.</text>
</comment>
<comment type="subcellular location">
    <subcellularLocation>
        <location evidence="1">Cytoplasm</location>
    </subcellularLocation>
</comment>
<comment type="similarity">
    <text evidence="1">Belongs to the PRA-CH family.</text>
</comment>
<accession>Q2W4W4</accession>
<keyword id="KW-0028">Amino-acid biosynthesis</keyword>
<keyword id="KW-0963">Cytoplasm</keyword>
<keyword id="KW-0368">Histidine biosynthesis</keyword>
<keyword id="KW-0378">Hydrolase</keyword>
<keyword id="KW-0460">Magnesium</keyword>
<keyword id="KW-0479">Metal-binding</keyword>
<keyword id="KW-0862">Zinc</keyword>